<gene>
    <name type="ordered locus">BCG9842_B4128</name>
</gene>
<accession>B7ILA4</accession>
<feature type="chain" id="PRO_1000130599" description="Nucleotide-binding protein BCG9842_B4128">
    <location>
        <begin position="1"/>
        <end position="163"/>
    </location>
</feature>
<sequence>MAKDSSFDIVSKVELPEVTNAINIALKEIQNRYDFKGSKSDIKLEKEVLVLTSDDEFKLDQVKDVLISKLVKRNVPIKNLDYGKVEAATGNTVRQRATLQQGIDKDNAKKINNIIKEMKLKVKTQVQDDQVRVTAKSRDDLQAVIAAVRSADLPIDVQFINYR</sequence>
<protein>
    <recommendedName>
        <fullName evidence="1">Nucleotide-binding protein BCG9842_B4128</fullName>
    </recommendedName>
</protein>
<proteinExistence type="inferred from homology"/>
<evidence type="ECO:0000255" key="1">
    <source>
        <dbReference type="HAMAP-Rule" id="MF_00632"/>
    </source>
</evidence>
<organism>
    <name type="scientific">Bacillus cereus (strain G9842)</name>
    <dbReference type="NCBI Taxonomy" id="405531"/>
    <lineage>
        <taxon>Bacteria</taxon>
        <taxon>Bacillati</taxon>
        <taxon>Bacillota</taxon>
        <taxon>Bacilli</taxon>
        <taxon>Bacillales</taxon>
        <taxon>Bacillaceae</taxon>
        <taxon>Bacillus</taxon>
        <taxon>Bacillus cereus group</taxon>
    </lineage>
</organism>
<reference key="1">
    <citation type="submission" date="2008-10" db="EMBL/GenBank/DDBJ databases">
        <title>Genome sequence of Bacillus cereus G9842.</title>
        <authorList>
            <person name="Dodson R.J."/>
            <person name="Durkin A.S."/>
            <person name="Rosovitz M.J."/>
            <person name="Rasko D.A."/>
            <person name="Hoffmaster A."/>
            <person name="Ravel J."/>
            <person name="Sutton G."/>
        </authorList>
    </citation>
    <scope>NUCLEOTIDE SEQUENCE [LARGE SCALE GENOMIC DNA]</scope>
    <source>
        <strain>G9842</strain>
    </source>
</reference>
<dbReference type="EMBL" id="CP001186">
    <property type="protein sequence ID" value="ACK96252.1"/>
    <property type="molecule type" value="Genomic_DNA"/>
</dbReference>
<dbReference type="RefSeq" id="WP_001040146.1">
    <property type="nucleotide sequence ID" value="NC_011772.1"/>
</dbReference>
<dbReference type="SMR" id="B7ILA4"/>
<dbReference type="KEGG" id="bcg:BCG9842_B4128"/>
<dbReference type="HOGENOM" id="CLU_099839_1_0_9"/>
<dbReference type="Proteomes" id="UP000006744">
    <property type="component" value="Chromosome"/>
</dbReference>
<dbReference type="GO" id="GO:0005829">
    <property type="term" value="C:cytosol"/>
    <property type="evidence" value="ECO:0007669"/>
    <property type="project" value="TreeGrafter"/>
</dbReference>
<dbReference type="GO" id="GO:0000166">
    <property type="term" value="F:nucleotide binding"/>
    <property type="evidence" value="ECO:0007669"/>
    <property type="project" value="TreeGrafter"/>
</dbReference>
<dbReference type="CDD" id="cd11740">
    <property type="entry name" value="YajQ_like"/>
    <property type="match status" value="1"/>
</dbReference>
<dbReference type="FunFam" id="3.30.70.990:FF:000002">
    <property type="entry name" value="UPF0234 protein LEP1GSC067_4943"/>
    <property type="match status" value="1"/>
</dbReference>
<dbReference type="FunFam" id="3.30.70.860:FF:000003">
    <property type="entry name" value="UPF0234 protein YBT020_06460"/>
    <property type="match status" value="1"/>
</dbReference>
<dbReference type="Gene3D" id="3.30.70.860">
    <property type="match status" value="1"/>
</dbReference>
<dbReference type="Gene3D" id="3.30.70.990">
    <property type="entry name" value="YajQ-like, domain 2"/>
    <property type="match status" value="1"/>
</dbReference>
<dbReference type="HAMAP" id="MF_00632">
    <property type="entry name" value="YajQ"/>
    <property type="match status" value="1"/>
</dbReference>
<dbReference type="InterPro" id="IPR007551">
    <property type="entry name" value="DUF520"/>
</dbReference>
<dbReference type="InterPro" id="IPR035571">
    <property type="entry name" value="UPF0234-like_C"/>
</dbReference>
<dbReference type="InterPro" id="IPR035570">
    <property type="entry name" value="UPF0234_N"/>
</dbReference>
<dbReference type="InterPro" id="IPR036183">
    <property type="entry name" value="YajQ-like_sf"/>
</dbReference>
<dbReference type="NCBIfam" id="NF003819">
    <property type="entry name" value="PRK05412.1"/>
    <property type="match status" value="1"/>
</dbReference>
<dbReference type="PANTHER" id="PTHR30476">
    <property type="entry name" value="UPF0234 PROTEIN YAJQ"/>
    <property type="match status" value="1"/>
</dbReference>
<dbReference type="PANTHER" id="PTHR30476:SF0">
    <property type="entry name" value="UPF0234 PROTEIN YAJQ"/>
    <property type="match status" value="1"/>
</dbReference>
<dbReference type="Pfam" id="PF04461">
    <property type="entry name" value="DUF520"/>
    <property type="match status" value="1"/>
</dbReference>
<dbReference type="SUPFAM" id="SSF89963">
    <property type="entry name" value="YajQ-like"/>
    <property type="match status" value="2"/>
</dbReference>
<comment type="function">
    <text evidence="1">Nucleotide-binding protein.</text>
</comment>
<comment type="similarity">
    <text evidence="1">Belongs to the YajQ family.</text>
</comment>
<name>Y4128_BACC2</name>
<keyword id="KW-0547">Nucleotide-binding</keyword>